<evidence type="ECO:0000250" key="1"/>
<evidence type="ECO:0000255" key="2"/>
<evidence type="ECO:0000305" key="3"/>
<dbReference type="EC" id="7.1.1.2"/>
<dbReference type="EMBL" id="AB009838">
    <property type="protein sequence ID" value="BAA24059.1"/>
    <property type="molecule type" value="Genomic_DNA"/>
</dbReference>
<dbReference type="RefSeq" id="NP_062834.2">
    <property type="nucleotide sequence ID" value="NC_002507.1"/>
</dbReference>
<dbReference type="SMR" id="O47476"/>
<dbReference type="GeneID" id="809439"/>
<dbReference type="CTD" id="4537"/>
<dbReference type="GO" id="GO:0031966">
    <property type="term" value="C:mitochondrial membrane"/>
    <property type="evidence" value="ECO:0007669"/>
    <property type="project" value="UniProtKB-SubCell"/>
</dbReference>
<dbReference type="GO" id="GO:0030964">
    <property type="term" value="C:NADH dehydrogenase complex"/>
    <property type="evidence" value="ECO:0007669"/>
    <property type="project" value="TreeGrafter"/>
</dbReference>
<dbReference type="GO" id="GO:0008137">
    <property type="term" value="F:NADH dehydrogenase (ubiquinone) activity"/>
    <property type="evidence" value="ECO:0007669"/>
    <property type="project" value="UniProtKB-EC"/>
</dbReference>
<dbReference type="Gene3D" id="1.20.58.1610">
    <property type="entry name" value="NADH:ubiquinone/plastoquinone oxidoreductase, chain 3"/>
    <property type="match status" value="1"/>
</dbReference>
<dbReference type="InterPro" id="IPR000440">
    <property type="entry name" value="NADH_UbQ/plastoQ_OxRdtase_su3"/>
</dbReference>
<dbReference type="InterPro" id="IPR038430">
    <property type="entry name" value="NDAH_ubi_oxred_su3_sf"/>
</dbReference>
<dbReference type="PANTHER" id="PTHR11058">
    <property type="entry name" value="NADH-UBIQUINONE OXIDOREDUCTASE CHAIN 3"/>
    <property type="match status" value="1"/>
</dbReference>
<dbReference type="PANTHER" id="PTHR11058:SF9">
    <property type="entry name" value="NADH-UBIQUINONE OXIDOREDUCTASE CHAIN 3"/>
    <property type="match status" value="1"/>
</dbReference>
<dbReference type="Pfam" id="PF00507">
    <property type="entry name" value="Oxidored_q4"/>
    <property type="match status" value="1"/>
</dbReference>
<geneLocation type="mitochondrion"/>
<organism>
    <name type="scientific">Heterololigo bleekeri</name>
    <name type="common">Spear squid</name>
    <name type="synonym">Loligo bleekeri</name>
    <dbReference type="NCBI Taxonomy" id="1423826"/>
    <lineage>
        <taxon>Eukaryota</taxon>
        <taxon>Metazoa</taxon>
        <taxon>Spiralia</taxon>
        <taxon>Lophotrochozoa</taxon>
        <taxon>Mollusca</taxon>
        <taxon>Cephalopoda</taxon>
        <taxon>Coleoidea</taxon>
        <taxon>Decapodiformes</taxon>
        <taxon>Myopsida</taxon>
        <taxon>Loliginidae</taxon>
        <taxon>Heterololigo</taxon>
    </lineage>
</organism>
<accession>O47476</accession>
<reference key="1">
    <citation type="submission" date="1997-12" db="EMBL/GenBank/DDBJ databases">
        <title>Completing of squid (Loligo breekeri) mitochondrial genome sequencing.</title>
        <authorList>
            <person name="Tomita K."/>
            <person name="Ueda T."/>
            <person name="Watanabe K."/>
        </authorList>
    </citation>
    <scope>NUCLEOTIDE SEQUENCE [GENOMIC DNA]</scope>
</reference>
<comment type="function">
    <text evidence="1">Core subunit of the mitochondrial membrane respiratory chain NADH dehydrogenase (Complex I) that is believed to belong to the minimal assembly required for catalysis. Complex I functions in the transfer of electrons from NADH to the respiratory chain. The immediate electron acceptor for the enzyme is believed to be ubiquinone (By similarity).</text>
</comment>
<comment type="catalytic activity">
    <reaction>
        <text>a ubiquinone + NADH + 5 H(+)(in) = a ubiquinol + NAD(+) + 4 H(+)(out)</text>
        <dbReference type="Rhea" id="RHEA:29091"/>
        <dbReference type="Rhea" id="RHEA-COMP:9565"/>
        <dbReference type="Rhea" id="RHEA-COMP:9566"/>
        <dbReference type="ChEBI" id="CHEBI:15378"/>
        <dbReference type="ChEBI" id="CHEBI:16389"/>
        <dbReference type="ChEBI" id="CHEBI:17976"/>
        <dbReference type="ChEBI" id="CHEBI:57540"/>
        <dbReference type="ChEBI" id="CHEBI:57945"/>
        <dbReference type="EC" id="7.1.1.2"/>
    </reaction>
</comment>
<comment type="subcellular location">
    <subcellularLocation>
        <location evidence="1">Mitochondrion membrane</location>
        <topology evidence="1">Multi-pass membrane protein</topology>
    </subcellularLocation>
</comment>
<comment type="similarity">
    <text evidence="3">Belongs to the complex I subunit 3 family.</text>
</comment>
<name>NU3M_HETBL</name>
<gene>
    <name type="primary">ND3</name>
</gene>
<sequence>MVTILIYLLILLIINVVLLLLGLIINKRSYSDREKNSPFECGFDPSIHTRAPFSMRFFLLAVIFLIFDVEIILLLPLTSNILNSNTHWPLTSSMIFLTILLIGLFHEWNQGSLDWMK</sequence>
<proteinExistence type="inferred from homology"/>
<feature type="chain" id="PRO_0000117758" description="NADH-ubiquinone oxidoreductase chain 3">
    <location>
        <begin position="1"/>
        <end position="117"/>
    </location>
</feature>
<feature type="transmembrane region" description="Helical" evidence="2">
    <location>
        <begin position="4"/>
        <end position="24"/>
    </location>
</feature>
<feature type="transmembrane region" description="Helical" evidence="2">
    <location>
        <begin position="57"/>
        <end position="77"/>
    </location>
</feature>
<feature type="transmembrane region" description="Helical" evidence="2">
    <location>
        <begin position="88"/>
        <end position="108"/>
    </location>
</feature>
<keyword id="KW-0249">Electron transport</keyword>
<keyword id="KW-0472">Membrane</keyword>
<keyword id="KW-0496">Mitochondrion</keyword>
<keyword id="KW-0520">NAD</keyword>
<keyword id="KW-0679">Respiratory chain</keyword>
<keyword id="KW-1278">Translocase</keyword>
<keyword id="KW-0812">Transmembrane</keyword>
<keyword id="KW-1133">Transmembrane helix</keyword>
<keyword id="KW-0813">Transport</keyword>
<keyword id="KW-0830">Ubiquinone</keyword>
<protein>
    <recommendedName>
        <fullName>NADH-ubiquinone oxidoreductase chain 3</fullName>
        <ecNumber>7.1.1.2</ecNumber>
    </recommendedName>
    <alternativeName>
        <fullName>NADH dehydrogenase subunit 3</fullName>
    </alternativeName>
</protein>